<protein>
    <recommendedName>
        <fullName evidence="1">UPF0154 protein SPJ_1787</fullName>
    </recommendedName>
</protein>
<gene>
    <name type="ordered locus">SPJ_1787</name>
</gene>
<dbReference type="EMBL" id="CP000919">
    <property type="protein sequence ID" value="ACO19730.1"/>
    <property type="molecule type" value="Genomic_DNA"/>
</dbReference>
<dbReference type="RefSeq" id="WP_000364990.1">
    <property type="nucleotide sequence ID" value="NC_012466.1"/>
</dbReference>
<dbReference type="SMR" id="C1CGA6"/>
<dbReference type="KEGG" id="sjj:SPJ_1787"/>
<dbReference type="HOGENOM" id="CLU_180108_0_0_9"/>
<dbReference type="Proteomes" id="UP000002206">
    <property type="component" value="Chromosome"/>
</dbReference>
<dbReference type="GO" id="GO:0005886">
    <property type="term" value="C:plasma membrane"/>
    <property type="evidence" value="ECO:0007669"/>
    <property type="project" value="UniProtKB-SubCell"/>
</dbReference>
<dbReference type="HAMAP" id="MF_00363">
    <property type="entry name" value="UPF0154"/>
    <property type="match status" value="1"/>
</dbReference>
<dbReference type="InterPro" id="IPR005359">
    <property type="entry name" value="UPF0154"/>
</dbReference>
<dbReference type="Pfam" id="PF03672">
    <property type="entry name" value="UPF0154"/>
    <property type="match status" value="1"/>
</dbReference>
<keyword id="KW-1003">Cell membrane</keyword>
<keyword id="KW-0472">Membrane</keyword>
<keyword id="KW-0812">Transmembrane</keyword>
<keyword id="KW-1133">Transmembrane helix</keyword>
<name>Y1787_STRZJ</name>
<evidence type="ECO:0000255" key="1">
    <source>
        <dbReference type="HAMAP-Rule" id="MF_00363"/>
    </source>
</evidence>
<accession>C1CGA6</accession>
<reference key="1">
    <citation type="journal article" date="2010" name="Genome Biol.">
        <title>Structure and dynamics of the pan-genome of Streptococcus pneumoniae and closely related species.</title>
        <authorList>
            <person name="Donati C."/>
            <person name="Hiller N.L."/>
            <person name="Tettelin H."/>
            <person name="Muzzi A."/>
            <person name="Croucher N.J."/>
            <person name="Angiuoli S.V."/>
            <person name="Oggioni M."/>
            <person name="Dunning Hotopp J.C."/>
            <person name="Hu F.Z."/>
            <person name="Riley D.R."/>
            <person name="Covacci A."/>
            <person name="Mitchell T.J."/>
            <person name="Bentley S.D."/>
            <person name="Kilian M."/>
            <person name="Ehrlich G.D."/>
            <person name="Rappuoli R."/>
            <person name="Moxon E.R."/>
            <person name="Masignani V."/>
        </authorList>
    </citation>
    <scope>NUCLEOTIDE SEQUENCE [LARGE SCALE GENOMIC DNA]</scope>
    <source>
        <strain>JJA</strain>
    </source>
</reference>
<organism>
    <name type="scientific">Streptococcus pneumoniae (strain JJA)</name>
    <dbReference type="NCBI Taxonomy" id="488222"/>
    <lineage>
        <taxon>Bacteria</taxon>
        <taxon>Bacillati</taxon>
        <taxon>Bacillota</taxon>
        <taxon>Bacilli</taxon>
        <taxon>Lactobacillales</taxon>
        <taxon>Streptococcaceae</taxon>
        <taxon>Streptococcus</taxon>
    </lineage>
</organism>
<proteinExistence type="inferred from homology"/>
<feature type="chain" id="PRO_1000197732" description="UPF0154 protein SPJ_1787">
    <location>
        <begin position="1"/>
        <end position="82"/>
    </location>
</feature>
<feature type="transmembrane region" description="Helical" evidence="1">
    <location>
        <begin position="5"/>
        <end position="25"/>
    </location>
</feature>
<comment type="subcellular location">
    <subcellularLocation>
        <location evidence="1">Cell membrane</location>
        <topology evidence="1">Single-pass membrane protein</topology>
    </subcellularLocation>
</comment>
<comment type="similarity">
    <text evidence="1">Belongs to the UPF0154 family.</text>
</comment>
<sequence length="82" mass="9086">MDLLLAIVLIVLAFLGGALGGMYLVRKQIEKEFADNPRLNAEAVRTLLSANGQKPSEAKVQQVYHQIIRQQKAALANNKKKK</sequence>